<comment type="catalytic activity">
    <reaction evidence="1">
        <text>D-glucuronate = D-fructuronate</text>
        <dbReference type="Rhea" id="RHEA:13049"/>
        <dbReference type="ChEBI" id="CHEBI:58720"/>
        <dbReference type="ChEBI" id="CHEBI:59863"/>
        <dbReference type="EC" id="5.3.1.12"/>
    </reaction>
</comment>
<comment type="catalytic activity">
    <reaction evidence="1">
        <text>aldehydo-D-galacturonate = keto-D-tagaturonate</text>
        <dbReference type="Rhea" id="RHEA:27702"/>
        <dbReference type="ChEBI" id="CHEBI:12952"/>
        <dbReference type="ChEBI" id="CHEBI:17886"/>
        <dbReference type="EC" id="5.3.1.12"/>
    </reaction>
</comment>
<comment type="pathway">
    <text evidence="1">Carbohydrate metabolism; pentose and glucuronate interconversion.</text>
</comment>
<comment type="similarity">
    <text evidence="1">Belongs to the metallo-dependent hydrolases superfamily. Uronate isomerase family.</text>
</comment>
<feature type="chain" id="PRO_0000172779" description="Uronate isomerase">
    <location>
        <begin position="1"/>
        <end position="474"/>
    </location>
</feature>
<name>UXAC_PHOLL</name>
<reference key="1">
    <citation type="journal article" date="2003" name="Nat. Biotechnol.">
        <title>The genome sequence of the entomopathogenic bacterium Photorhabdus luminescens.</title>
        <authorList>
            <person name="Duchaud E."/>
            <person name="Rusniok C."/>
            <person name="Frangeul L."/>
            <person name="Buchrieser C."/>
            <person name="Givaudan A."/>
            <person name="Taourit S."/>
            <person name="Bocs S."/>
            <person name="Boursaux-Eude C."/>
            <person name="Chandler M."/>
            <person name="Charles J.-F."/>
            <person name="Dassa E."/>
            <person name="Derose R."/>
            <person name="Derzelle S."/>
            <person name="Freyssinet G."/>
            <person name="Gaudriault S."/>
            <person name="Medigue C."/>
            <person name="Lanois A."/>
            <person name="Powell K."/>
            <person name="Siguier P."/>
            <person name="Vincent R."/>
            <person name="Wingate V."/>
            <person name="Zouine M."/>
            <person name="Glaser P."/>
            <person name="Boemare N."/>
            <person name="Danchin A."/>
            <person name="Kunst F."/>
        </authorList>
    </citation>
    <scope>NUCLEOTIDE SEQUENCE [LARGE SCALE GENOMIC DNA]</scope>
    <source>
        <strain>DSM 15139 / CIP 105565 / TT01</strain>
    </source>
</reference>
<accession>Q7N9X5</accession>
<gene>
    <name evidence="1" type="primary">uxaC</name>
    <name type="ordered locus">plu0176</name>
</gene>
<protein>
    <recommendedName>
        <fullName evidence="1">Uronate isomerase</fullName>
        <ecNumber evidence="1">5.3.1.12</ecNumber>
    </recommendedName>
    <alternativeName>
        <fullName evidence="1">Glucuronate isomerase</fullName>
    </alternativeName>
    <alternativeName>
        <fullName evidence="1">Uronic isomerase</fullName>
    </alternativeName>
</protein>
<organism>
    <name type="scientific">Photorhabdus laumondii subsp. laumondii (strain DSM 15139 / CIP 105565 / TT01)</name>
    <name type="common">Photorhabdus luminescens subsp. laumondii</name>
    <dbReference type="NCBI Taxonomy" id="243265"/>
    <lineage>
        <taxon>Bacteria</taxon>
        <taxon>Pseudomonadati</taxon>
        <taxon>Pseudomonadota</taxon>
        <taxon>Gammaproteobacteria</taxon>
        <taxon>Enterobacterales</taxon>
        <taxon>Morganellaceae</taxon>
        <taxon>Photorhabdus</taxon>
    </lineage>
</organism>
<sequence length="474" mass="54194">MKNFMCDDFLLNNETARQLYHEHAADMPIYDYHCHLNPREIAENRRFDNLGQIWLEGDHYKWRAMRCAGIDESLITGKQTRDYEKYQAWAETVPLTLGNPLYHWTHLELRRPFGISGILFGPQTADEIWHQCNEKLAAPAFSARGIMQQMNVRMVGTTDDPVDSLQYHRQIATDESFDIEVLPSWRPDRVFKIELAGFIDYIKQLEAVADVSIVAFADVLNALERRLEHFAAHGCRAADHGIENLRYAPIPDETVLNGILQKRLAGGILSELEIAQYTTAILVWLGRQYAARGWVMQMHIGAIRNNNSRMFRLLGADSGFDSIGDNNIAWPLSRLLDSMDVTDELPKTILYCLNPRDNEVIATMASNFQGGGIAGKVQFGSGWWFNDQKDGMLRQLEQLSQLGLLSQFVGMLTDSRSFLSYTRHEYFRRILCNVLGQWAEKGEIPNHKAMLGQIVEDICFNNARRYFALPGENL</sequence>
<dbReference type="EC" id="5.3.1.12" evidence="1"/>
<dbReference type="EMBL" id="BX571859">
    <property type="protein sequence ID" value="CAE12471.1"/>
    <property type="molecule type" value="Genomic_DNA"/>
</dbReference>
<dbReference type="RefSeq" id="WP_011144578.1">
    <property type="nucleotide sequence ID" value="NC_005126.1"/>
</dbReference>
<dbReference type="SMR" id="Q7N9X5"/>
<dbReference type="STRING" id="243265.plu0176"/>
<dbReference type="GeneID" id="48846473"/>
<dbReference type="KEGG" id="plu:plu0176"/>
<dbReference type="eggNOG" id="COG1904">
    <property type="taxonomic scope" value="Bacteria"/>
</dbReference>
<dbReference type="HOGENOM" id="CLU_044465_1_0_6"/>
<dbReference type="OrthoDB" id="9766564at2"/>
<dbReference type="UniPathway" id="UPA00246"/>
<dbReference type="Proteomes" id="UP000002514">
    <property type="component" value="Chromosome"/>
</dbReference>
<dbReference type="GO" id="GO:0008880">
    <property type="term" value="F:glucuronate isomerase activity"/>
    <property type="evidence" value="ECO:0007669"/>
    <property type="project" value="UniProtKB-UniRule"/>
</dbReference>
<dbReference type="GO" id="GO:0019698">
    <property type="term" value="P:D-galacturonate catabolic process"/>
    <property type="evidence" value="ECO:0007669"/>
    <property type="project" value="TreeGrafter"/>
</dbReference>
<dbReference type="GO" id="GO:0042840">
    <property type="term" value="P:D-glucuronate catabolic process"/>
    <property type="evidence" value="ECO:0007669"/>
    <property type="project" value="TreeGrafter"/>
</dbReference>
<dbReference type="Gene3D" id="3.20.20.140">
    <property type="entry name" value="Metal-dependent hydrolases"/>
    <property type="match status" value="1"/>
</dbReference>
<dbReference type="Gene3D" id="1.10.2020.10">
    <property type="entry name" value="uronate isomerase, domain 2, chain A"/>
    <property type="match status" value="1"/>
</dbReference>
<dbReference type="HAMAP" id="MF_00675">
    <property type="entry name" value="UxaC"/>
    <property type="match status" value="1"/>
</dbReference>
<dbReference type="InterPro" id="IPR032466">
    <property type="entry name" value="Metal_Hydrolase"/>
</dbReference>
<dbReference type="InterPro" id="IPR003766">
    <property type="entry name" value="Uronate_isomerase"/>
</dbReference>
<dbReference type="NCBIfam" id="NF002794">
    <property type="entry name" value="PRK02925.1"/>
    <property type="match status" value="1"/>
</dbReference>
<dbReference type="PANTHER" id="PTHR30068">
    <property type="entry name" value="URONATE ISOMERASE"/>
    <property type="match status" value="1"/>
</dbReference>
<dbReference type="PANTHER" id="PTHR30068:SF4">
    <property type="entry name" value="URONATE ISOMERASE"/>
    <property type="match status" value="1"/>
</dbReference>
<dbReference type="Pfam" id="PF02614">
    <property type="entry name" value="UxaC"/>
    <property type="match status" value="1"/>
</dbReference>
<dbReference type="SUPFAM" id="SSF51556">
    <property type="entry name" value="Metallo-dependent hydrolases"/>
    <property type="match status" value="1"/>
</dbReference>
<evidence type="ECO:0000255" key="1">
    <source>
        <dbReference type="HAMAP-Rule" id="MF_00675"/>
    </source>
</evidence>
<proteinExistence type="inferred from homology"/>
<keyword id="KW-0413">Isomerase</keyword>
<keyword id="KW-1185">Reference proteome</keyword>